<proteinExistence type="evidence at protein level"/>
<dbReference type="SMR" id="P69130"/>
<dbReference type="GO" id="GO:0005615">
    <property type="term" value="C:extracellular space"/>
    <property type="evidence" value="ECO:0007669"/>
    <property type="project" value="TreeGrafter"/>
</dbReference>
<dbReference type="GO" id="GO:0005179">
    <property type="term" value="F:hormone activity"/>
    <property type="evidence" value="ECO:0007669"/>
    <property type="project" value="UniProtKB-KW"/>
</dbReference>
<dbReference type="GO" id="GO:0005148">
    <property type="term" value="F:prolactin receptor binding"/>
    <property type="evidence" value="ECO:0000250"/>
    <property type="project" value="AgBase"/>
</dbReference>
<dbReference type="GO" id="GO:0016176">
    <property type="term" value="F:superoxide-generating NADPH oxidase activator activity"/>
    <property type="evidence" value="ECO:0000250"/>
    <property type="project" value="AgBase"/>
</dbReference>
<dbReference type="GO" id="GO:0007259">
    <property type="term" value="P:cell surface receptor signaling pathway via JAK-STAT"/>
    <property type="evidence" value="ECO:0000250"/>
    <property type="project" value="AgBase"/>
</dbReference>
<dbReference type="GO" id="GO:0010629">
    <property type="term" value="P:negative regulation of gene expression"/>
    <property type="evidence" value="ECO:0000315"/>
    <property type="project" value="AgBase"/>
</dbReference>
<dbReference type="GO" id="GO:0010628">
    <property type="term" value="P:positive regulation of gene expression"/>
    <property type="evidence" value="ECO:0000250"/>
    <property type="project" value="AgBase"/>
</dbReference>
<dbReference type="GO" id="GO:0070665">
    <property type="term" value="P:positive regulation of leukocyte proliferation"/>
    <property type="evidence" value="ECO:0000250"/>
    <property type="project" value="AgBase"/>
</dbReference>
<dbReference type="GO" id="GO:0050766">
    <property type="term" value="P:positive regulation of phagocytosis"/>
    <property type="evidence" value="ECO:0000315"/>
    <property type="project" value="AgBase"/>
</dbReference>
<dbReference type="GO" id="GO:1903428">
    <property type="term" value="P:positive regulation of reactive oxygen species biosynthetic process"/>
    <property type="evidence" value="ECO:0000250"/>
    <property type="project" value="AgBase"/>
</dbReference>
<dbReference type="GO" id="GO:0046427">
    <property type="term" value="P:positive regulation of receptor signaling pathway via JAK-STAT"/>
    <property type="evidence" value="ECO:0007669"/>
    <property type="project" value="TreeGrafter"/>
</dbReference>
<dbReference type="GO" id="GO:0060267">
    <property type="term" value="P:positive regulation of respiratory burst"/>
    <property type="evidence" value="ECO:0000250"/>
    <property type="project" value="AgBase"/>
</dbReference>
<dbReference type="GO" id="GO:0032930">
    <property type="term" value="P:positive regulation of superoxide anion generation"/>
    <property type="evidence" value="ECO:0000315"/>
    <property type="project" value="AgBase"/>
</dbReference>
<dbReference type="GO" id="GO:0002637">
    <property type="term" value="P:regulation of immunoglobulin production"/>
    <property type="evidence" value="ECO:0000315"/>
    <property type="project" value="AgBase"/>
</dbReference>
<dbReference type="GO" id="GO:0031667">
    <property type="term" value="P:response to nutrient levels"/>
    <property type="evidence" value="ECO:0007669"/>
    <property type="project" value="TreeGrafter"/>
</dbReference>
<dbReference type="FunFam" id="1.20.1250.10:FF:000037">
    <property type="entry name" value="Prolactin"/>
    <property type="match status" value="1"/>
</dbReference>
<dbReference type="Gene3D" id="1.20.1250.10">
    <property type="match status" value="1"/>
</dbReference>
<dbReference type="InterPro" id="IPR009079">
    <property type="entry name" value="4_helix_cytokine-like_core"/>
</dbReference>
<dbReference type="InterPro" id="IPR001400">
    <property type="entry name" value="Somatotropin/Prolactin"/>
</dbReference>
<dbReference type="InterPro" id="IPR018116">
    <property type="entry name" value="Somatotropin_CS"/>
</dbReference>
<dbReference type="PANTHER" id="PTHR11417:SF5">
    <property type="entry name" value="PROLACTIN"/>
    <property type="match status" value="1"/>
</dbReference>
<dbReference type="PANTHER" id="PTHR11417">
    <property type="entry name" value="SOMATOTROPIN,PROLACTIN"/>
    <property type="match status" value="1"/>
</dbReference>
<dbReference type="Pfam" id="PF00103">
    <property type="entry name" value="Hormone_1"/>
    <property type="match status" value="1"/>
</dbReference>
<dbReference type="PRINTS" id="PR00836">
    <property type="entry name" value="SOMATOTROPIN"/>
</dbReference>
<dbReference type="SUPFAM" id="SSF47266">
    <property type="entry name" value="4-helical cytokines"/>
    <property type="match status" value="1"/>
</dbReference>
<dbReference type="PROSITE" id="PS00266">
    <property type="entry name" value="SOMATOTROPIN_1"/>
    <property type="match status" value="1"/>
</dbReference>
<dbReference type="PROSITE" id="PS00338">
    <property type="entry name" value="SOMATOTROPIN_2"/>
    <property type="match status" value="1"/>
</dbReference>
<comment type="subcellular location">
    <subcellularLocation>
        <location>Secreted</location>
    </subcellularLocation>
</comment>
<comment type="similarity">
    <text evidence="2">Belongs to the somatotropin/prolactin family.</text>
</comment>
<organism>
    <name type="scientific">Oncorhynchus keta</name>
    <name type="common">Chum salmon</name>
    <name type="synonym">Salmo keta</name>
    <dbReference type="NCBI Taxonomy" id="8018"/>
    <lineage>
        <taxon>Eukaryota</taxon>
        <taxon>Metazoa</taxon>
        <taxon>Chordata</taxon>
        <taxon>Craniata</taxon>
        <taxon>Vertebrata</taxon>
        <taxon>Euteleostomi</taxon>
        <taxon>Actinopterygii</taxon>
        <taxon>Neopterygii</taxon>
        <taxon>Teleostei</taxon>
        <taxon>Protacanthopterygii</taxon>
        <taxon>Salmoniformes</taxon>
        <taxon>Salmonidae</taxon>
        <taxon>Salmoninae</taxon>
        <taxon>Oncorhynchus</taxon>
    </lineage>
</organism>
<gene>
    <name type="primary">prl1</name>
</gene>
<feature type="signal peptide" evidence="1">
    <location>
        <begin position="1"/>
        <end position="23"/>
    </location>
</feature>
<feature type="chain" id="PRO_0000032939" description="Prolactin-1">
    <location>
        <begin position="24"/>
        <end position="211"/>
    </location>
</feature>
<feature type="disulfide bond" evidence="1">
    <location>
        <begin position="69"/>
        <end position="184"/>
    </location>
</feature>
<feature type="disulfide bond" evidence="1">
    <location>
        <begin position="201"/>
        <end position="211"/>
    </location>
</feature>
<feature type="sequence conflict" description="In Ref. 2; AA sequence." evidence="2" ref="2">
    <original>Y</original>
    <variation>S</variation>
    <location>
        <position position="97"/>
    </location>
</feature>
<feature type="sequence conflict" description="In Ref. 2; AA sequence." evidence="2" ref="2">
    <location>
        <position position="119"/>
    </location>
</feature>
<feature type="sequence conflict" description="In Ref. 2; AA sequence." evidence="2" ref="2">
    <original>N</original>
    <variation>K</variation>
    <location>
        <position position="205"/>
    </location>
</feature>
<reference key="1">
    <citation type="journal article" date="1988" name="Eur. J. Biochem.">
        <title>Molecular cloning and expression of salmon prolactin cDNA.</title>
        <authorList>
            <person name="Song S."/>
            <person name="Trinh K.-Y."/>
            <person name="Hew C.-L."/>
            <person name="Hwang S.J."/>
            <person name="Belkhode S."/>
            <person name="Idler D.R."/>
        </authorList>
    </citation>
    <scope>NUCLEOTIDE SEQUENCE</scope>
</reference>
<reference key="2">
    <citation type="journal article" date="1986" name="Arch. Biochem. Biophys.">
        <title>Primary structure of chum salmon prolactins: occurrence of highly conserved regions.</title>
        <authorList>
            <person name="Yasuda A."/>
            <person name="Itoh H."/>
            <person name="Kawauchi H."/>
        </authorList>
    </citation>
    <scope>PROTEIN SEQUENCE OF 24-211</scope>
    <scope>DISULFIDE BONDS</scope>
    <source>
        <tissue>Pituitary</tissue>
    </source>
</reference>
<evidence type="ECO:0000269" key="1">
    <source>
    </source>
</evidence>
<evidence type="ECO:0000305" key="2"/>
<keyword id="KW-0903">Direct protein sequencing</keyword>
<keyword id="KW-1015">Disulfide bond</keyword>
<keyword id="KW-0372">Hormone</keyword>
<keyword id="KW-0964">Secreted</keyword>
<keyword id="KW-0732">Signal</keyword>
<name>PRL1_ONCKE</name>
<sequence length="211" mass="23559">MARRSQGTKLHLAVLCLVVSCHAIGLSDLMERASQRSDKLHSLSTSLTKDLDSHFPPMGRVMMPRPSMCHTSSLQTPKDKEQALKVSENELISLARYLLLAWNDPLLLLSSEAPTLPHTPSNGDISSKIRELQDYSKSLGDGLDIMVNKMGPSSQYISSIPFKGGDLGNDKTSRLINFHFLMSCFRRDSHKIDSFLKVLRCRATNMRPETC</sequence>
<protein>
    <recommendedName>
        <fullName>Prolactin-1</fullName>
    </recommendedName>
    <alternativeName>
        <fullName>Prolactin I</fullName>
        <shortName>PRL-I</shortName>
    </alternativeName>
</protein>
<accession>P69130</accession>
<accession>P09583</accession>
<accession>P15470</accession>